<gene>
    <name evidence="4" type="primary">lafU</name>
    <name evidence="8" type="ordered locus">EC042_0288</name>
    <name evidence="7" type="ORF">Ec042-0288</name>
</gene>
<keyword id="KW-0997">Cell inner membrane</keyword>
<keyword id="KW-1003">Cell membrane</keyword>
<keyword id="KW-0472">Membrane</keyword>
<keyword id="KW-0812">Transmembrane</keyword>
<keyword id="KW-1133">Transmembrane helix</keyword>
<feature type="chain" id="PRO_0000432476" description="Putative flagellar export/assembly protein LafU">
    <location>
        <begin position="1"/>
        <end position="307"/>
    </location>
</feature>
<feature type="transmembrane region" description="Helical" evidence="1">
    <location>
        <begin position="32"/>
        <end position="54"/>
    </location>
</feature>
<feature type="domain" description="OmpA-like" evidence="2">
    <location>
        <begin position="154"/>
        <end position="272"/>
    </location>
</feature>
<feature type="region of interest" description="Disordered" evidence="3">
    <location>
        <begin position="87"/>
        <end position="108"/>
    </location>
</feature>
<protein>
    <recommendedName>
        <fullName evidence="5">Putative flagellar export/assembly protein LafU</fullName>
    </recommendedName>
</protein>
<evidence type="ECO:0000255" key="1"/>
<evidence type="ECO:0000255" key="2">
    <source>
        <dbReference type="PROSITE-ProRule" id="PRU00473"/>
    </source>
</evidence>
<evidence type="ECO:0000256" key="3">
    <source>
        <dbReference type="SAM" id="MobiDB-lite"/>
    </source>
</evidence>
<evidence type="ECO:0000303" key="4">
    <source>
    </source>
</evidence>
<evidence type="ECO:0000305" key="5"/>
<evidence type="ECO:0000305" key="6">
    <source>
    </source>
</evidence>
<evidence type="ECO:0000312" key="7">
    <source>
        <dbReference type="EMBL" id="CAH19156.1"/>
    </source>
</evidence>
<evidence type="ECO:0000312" key="8">
    <source>
        <dbReference type="EMBL" id="CBG33121.1"/>
    </source>
</evidence>
<dbReference type="EMBL" id="CR753847">
    <property type="protein sequence ID" value="CAH19156.1"/>
    <property type="molecule type" value="Genomic_DNA"/>
</dbReference>
<dbReference type="EMBL" id="FN554766">
    <property type="protein sequence ID" value="CBG33121.1"/>
    <property type="molecule type" value="Genomic_DNA"/>
</dbReference>
<dbReference type="RefSeq" id="WP_001232553.1">
    <property type="nucleotide sequence ID" value="NC_017626.1"/>
</dbReference>
<dbReference type="SMR" id="D3GSC3"/>
<dbReference type="KEGG" id="elo:EC042_0288"/>
<dbReference type="PATRIC" id="fig|216592.3.peg.304"/>
<dbReference type="HOGENOM" id="CLU_016890_3_2_6"/>
<dbReference type="Proteomes" id="UP000001407">
    <property type="component" value="Chromosome"/>
</dbReference>
<dbReference type="GO" id="GO:0005886">
    <property type="term" value="C:plasma membrane"/>
    <property type="evidence" value="ECO:0007669"/>
    <property type="project" value="UniProtKB-SubCell"/>
</dbReference>
<dbReference type="CDD" id="cd07185">
    <property type="entry name" value="OmpA_C-like"/>
    <property type="match status" value="1"/>
</dbReference>
<dbReference type="Gene3D" id="3.30.1330.60">
    <property type="entry name" value="OmpA-like domain"/>
    <property type="match status" value="1"/>
</dbReference>
<dbReference type="InterPro" id="IPR050330">
    <property type="entry name" value="Bact_OuterMem_StrucFunc"/>
</dbReference>
<dbReference type="InterPro" id="IPR025713">
    <property type="entry name" value="MotB-like_N_dom"/>
</dbReference>
<dbReference type="InterPro" id="IPR006665">
    <property type="entry name" value="OmpA-like"/>
</dbReference>
<dbReference type="InterPro" id="IPR036737">
    <property type="entry name" value="OmpA-like_sf"/>
</dbReference>
<dbReference type="NCBIfam" id="NF005273">
    <property type="entry name" value="PRK06778.1"/>
    <property type="match status" value="1"/>
</dbReference>
<dbReference type="PANTHER" id="PTHR30329:SF21">
    <property type="entry name" value="LIPOPROTEIN YIAD-RELATED"/>
    <property type="match status" value="1"/>
</dbReference>
<dbReference type="PANTHER" id="PTHR30329">
    <property type="entry name" value="STATOR ELEMENT OF FLAGELLAR MOTOR COMPLEX"/>
    <property type="match status" value="1"/>
</dbReference>
<dbReference type="Pfam" id="PF13677">
    <property type="entry name" value="MotB_plug"/>
    <property type="match status" value="1"/>
</dbReference>
<dbReference type="Pfam" id="PF00691">
    <property type="entry name" value="OmpA"/>
    <property type="match status" value="1"/>
</dbReference>
<dbReference type="SUPFAM" id="SSF103088">
    <property type="entry name" value="OmpA-like"/>
    <property type="match status" value="1"/>
</dbReference>
<dbReference type="PROSITE" id="PS51123">
    <property type="entry name" value="OMPA_2"/>
    <property type="match status" value="1"/>
</dbReference>
<accession>D3GSC3</accession>
<accession>Q5DXZ5</accession>
<name>LAFU_ECO44</name>
<sequence length="307" mass="34227">MRKTGNRRERGAKTTIVRRQIKKNHAGHHGGAWKVAFADFTLAMMALFMTLWIVNSVSKSERESIIAALHGQSIFNGGGLSPLNKISPSHPPKPATVAAPEETEKKARDVNEKTALLKKKSATELGELATSINTIARDAHMEANLEMEIVPQGLRVLIKDDQNRNMFERGSAQIMPFFKTLLVELAPVFDSLDNKIIITGHTDAMAYKNNIYNNWNLSGDRALSARRVLEEAGMPEDKVMQVSAMADQMLLDAKNPQSAGNRRIEIMVLTKSASDTLYQYFGQHGDKVVQPLVQKLDKQQVHSQRTR</sequence>
<comment type="function">
    <text evidence="6">Part of the flagellar gene cluster Flag-2. However, the Flag-2 flagellar system could be inactive in strain 042 due to a frameshift in lfgC.</text>
</comment>
<comment type="subcellular location">
    <subcellularLocation>
        <location evidence="5">Cell inner membrane</location>
        <topology evidence="1">Single-pass membrane protein</topology>
    </subcellularLocation>
</comment>
<comment type="similarity">
    <text evidence="5">Belongs to the MotB family.</text>
</comment>
<reference key="1">
    <citation type="journal article" date="2005" name="J. Bacteriol.">
        <title>The Flag-2 locus, an ancestral gene cluster, is potentially associated with a novel flagellar system from Escherichia coli.</title>
        <authorList>
            <person name="Ren C.-P."/>
            <person name="Beatson S.A."/>
            <person name="Parkhill J."/>
            <person name="Pallen M.J."/>
        </authorList>
    </citation>
    <scope>NUCLEOTIDE SEQUENCE [GENOMIC DNA]</scope>
    <scope>FUNCTION</scope>
    <source>
        <strain>042 / EAEC</strain>
    </source>
</reference>
<reference key="2">
    <citation type="journal article" date="2010" name="PLoS ONE">
        <title>Complete genome sequence and comparative metabolic profiling of the prototypical enteroaggregative Escherichia coli strain 042.</title>
        <authorList>
            <person name="Chaudhuri R.R."/>
            <person name="Sebaihia M."/>
            <person name="Hobman J.L."/>
            <person name="Webber M.A."/>
            <person name="Leyton D.L."/>
            <person name="Goldberg M.D."/>
            <person name="Cunningham A.F."/>
            <person name="Scott-Tucker A."/>
            <person name="Ferguson P.R."/>
            <person name="Thomas C.M."/>
            <person name="Frankel G."/>
            <person name="Tang C.M."/>
            <person name="Dudley E.G."/>
            <person name="Roberts I.S."/>
            <person name="Rasko D.A."/>
            <person name="Pallen M.J."/>
            <person name="Parkhill J."/>
            <person name="Nataro J.P."/>
            <person name="Thomson N.R."/>
            <person name="Henderson I.R."/>
        </authorList>
    </citation>
    <scope>NUCLEOTIDE SEQUENCE [LARGE SCALE GENOMIC DNA]</scope>
    <source>
        <strain>042 / EAEC</strain>
    </source>
</reference>
<proteinExistence type="inferred from homology"/>
<organism>
    <name type="scientific">Escherichia coli O44:H18 (strain 042 / EAEC)</name>
    <dbReference type="NCBI Taxonomy" id="216592"/>
    <lineage>
        <taxon>Bacteria</taxon>
        <taxon>Pseudomonadati</taxon>
        <taxon>Pseudomonadota</taxon>
        <taxon>Gammaproteobacteria</taxon>
        <taxon>Enterobacterales</taxon>
        <taxon>Enterobacteriaceae</taxon>
        <taxon>Escherichia</taxon>
    </lineage>
</organism>